<protein>
    <recommendedName>
        <fullName evidence="1">Thymidine kinase</fullName>
        <ecNumber evidence="1">2.7.1.21</ecNumber>
    </recommendedName>
</protein>
<feature type="chain" id="PRO_0000175015" description="Thymidine kinase">
    <location>
        <begin position="1"/>
        <end position="192"/>
    </location>
</feature>
<feature type="active site" description="Proton acceptor" evidence="1">
    <location>
        <position position="88"/>
    </location>
</feature>
<feature type="binding site" evidence="1">
    <location>
        <begin position="9"/>
        <end position="16"/>
    </location>
    <ligand>
        <name>ATP</name>
        <dbReference type="ChEBI" id="CHEBI:30616"/>
    </ligand>
</feature>
<feature type="binding site" evidence="1">
    <location>
        <begin position="87"/>
        <end position="90"/>
    </location>
    <ligand>
        <name>ATP</name>
        <dbReference type="ChEBI" id="CHEBI:30616"/>
    </ligand>
</feature>
<feature type="binding site" evidence="1">
    <location>
        <position position="145"/>
    </location>
    <ligand>
        <name>Zn(2+)</name>
        <dbReference type="ChEBI" id="CHEBI:29105"/>
    </ligand>
</feature>
<feature type="binding site" evidence="1">
    <location>
        <position position="147"/>
    </location>
    <ligand>
        <name>Zn(2+)</name>
        <dbReference type="ChEBI" id="CHEBI:29105"/>
    </ligand>
</feature>
<feature type="binding site" evidence="1">
    <location>
        <position position="182"/>
    </location>
    <ligand>
        <name>Zn(2+)</name>
        <dbReference type="ChEBI" id="CHEBI:29105"/>
    </ligand>
</feature>
<feature type="binding site" evidence="1">
    <location>
        <position position="185"/>
    </location>
    <ligand>
        <name>Zn(2+)</name>
        <dbReference type="ChEBI" id="CHEBI:29105"/>
    </ligand>
</feature>
<sequence>MAQLYFYYSAMNAGKSTSLLQSSYNYRERGMNTLVMTASIDDRYGKGKVASRIGIESDAQVFSSHDNLIEMITAAHQENHLSCVLVDECQFLSKEQVKQLTYIVDKIDIPVLCYGLRTDFQGELFSGSHYLLAWADKLVELKTICHCGRKANMVVRLDGEGKVMREGEQVAIGGNESYESVCRKHFREFIWD</sequence>
<comment type="catalytic activity">
    <reaction evidence="1">
        <text>thymidine + ATP = dTMP + ADP + H(+)</text>
        <dbReference type="Rhea" id="RHEA:19129"/>
        <dbReference type="ChEBI" id="CHEBI:15378"/>
        <dbReference type="ChEBI" id="CHEBI:17748"/>
        <dbReference type="ChEBI" id="CHEBI:30616"/>
        <dbReference type="ChEBI" id="CHEBI:63528"/>
        <dbReference type="ChEBI" id="CHEBI:456216"/>
        <dbReference type="EC" id="2.7.1.21"/>
    </reaction>
</comment>
<comment type="subunit">
    <text evidence="1">Homotetramer.</text>
</comment>
<comment type="subcellular location">
    <subcellularLocation>
        <location evidence="1">Cytoplasm</location>
    </subcellularLocation>
</comment>
<comment type="similarity">
    <text evidence="1">Belongs to the thymidine kinase family.</text>
</comment>
<name>KITH_SHEON</name>
<reference key="1">
    <citation type="journal article" date="2002" name="Nat. Biotechnol.">
        <title>Genome sequence of the dissimilatory metal ion-reducing bacterium Shewanella oneidensis.</title>
        <authorList>
            <person name="Heidelberg J.F."/>
            <person name="Paulsen I.T."/>
            <person name="Nelson K.E."/>
            <person name="Gaidos E.J."/>
            <person name="Nelson W.C."/>
            <person name="Read T.D."/>
            <person name="Eisen J.A."/>
            <person name="Seshadri R."/>
            <person name="Ward N.L."/>
            <person name="Methe B.A."/>
            <person name="Clayton R.A."/>
            <person name="Meyer T."/>
            <person name="Tsapin A."/>
            <person name="Scott J."/>
            <person name="Beanan M.J."/>
            <person name="Brinkac L.M."/>
            <person name="Daugherty S.C."/>
            <person name="DeBoy R.T."/>
            <person name="Dodson R.J."/>
            <person name="Durkin A.S."/>
            <person name="Haft D.H."/>
            <person name="Kolonay J.F."/>
            <person name="Madupu R."/>
            <person name="Peterson J.D."/>
            <person name="Umayam L.A."/>
            <person name="White O."/>
            <person name="Wolf A.M."/>
            <person name="Vamathevan J.J."/>
            <person name="Weidman J.F."/>
            <person name="Impraim M."/>
            <person name="Lee K."/>
            <person name="Berry K.J."/>
            <person name="Lee C."/>
            <person name="Mueller J."/>
            <person name="Khouri H.M."/>
            <person name="Gill J."/>
            <person name="Utterback T.R."/>
            <person name="McDonald L.A."/>
            <person name="Feldblyum T.V."/>
            <person name="Smith H.O."/>
            <person name="Venter J.C."/>
            <person name="Nealson K.H."/>
            <person name="Fraser C.M."/>
        </authorList>
    </citation>
    <scope>NUCLEOTIDE SEQUENCE [LARGE SCALE GENOMIC DNA]</scope>
    <source>
        <strain>ATCC 700550 / JCM 31522 / CIP 106686 / LMG 19005 / NCIMB 14063 / MR-1</strain>
    </source>
</reference>
<proteinExistence type="inferred from homology"/>
<gene>
    <name evidence="1" type="primary">tdk</name>
    <name type="ordered locus">SO_3140</name>
</gene>
<organism>
    <name type="scientific">Shewanella oneidensis (strain ATCC 700550 / JCM 31522 / CIP 106686 / LMG 19005 / NCIMB 14063 / MR-1)</name>
    <dbReference type="NCBI Taxonomy" id="211586"/>
    <lineage>
        <taxon>Bacteria</taxon>
        <taxon>Pseudomonadati</taxon>
        <taxon>Pseudomonadota</taxon>
        <taxon>Gammaproteobacteria</taxon>
        <taxon>Alteromonadales</taxon>
        <taxon>Shewanellaceae</taxon>
        <taxon>Shewanella</taxon>
    </lineage>
</organism>
<accession>Q8ECK0</accession>
<dbReference type="EC" id="2.7.1.21" evidence="1"/>
<dbReference type="EMBL" id="AE014299">
    <property type="protein sequence ID" value="AAN56142.1"/>
    <property type="molecule type" value="Genomic_DNA"/>
</dbReference>
<dbReference type="RefSeq" id="NP_718698.1">
    <property type="nucleotide sequence ID" value="NC_004347.2"/>
</dbReference>
<dbReference type="RefSeq" id="WP_011073032.1">
    <property type="nucleotide sequence ID" value="NC_004347.2"/>
</dbReference>
<dbReference type="SMR" id="Q8ECK0"/>
<dbReference type="STRING" id="211586.SO_3140"/>
<dbReference type="PaxDb" id="211586-SO_3140"/>
<dbReference type="KEGG" id="son:SO_3140"/>
<dbReference type="PATRIC" id="fig|211586.12.peg.3040"/>
<dbReference type="eggNOG" id="COG1435">
    <property type="taxonomic scope" value="Bacteria"/>
</dbReference>
<dbReference type="HOGENOM" id="CLU_064400_2_1_6"/>
<dbReference type="OrthoDB" id="9781579at2"/>
<dbReference type="PhylomeDB" id="Q8ECK0"/>
<dbReference type="BioCyc" id="SONE211586:G1GMP-2921-MONOMER"/>
<dbReference type="Proteomes" id="UP000008186">
    <property type="component" value="Chromosome"/>
</dbReference>
<dbReference type="GO" id="GO:0005829">
    <property type="term" value="C:cytosol"/>
    <property type="evidence" value="ECO:0000318"/>
    <property type="project" value="GO_Central"/>
</dbReference>
<dbReference type="GO" id="GO:0005524">
    <property type="term" value="F:ATP binding"/>
    <property type="evidence" value="ECO:0007669"/>
    <property type="project" value="UniProtKB-UniRule"/>
</dbReference>
<dbReference type="GO" id="GO:0004797">
    <property type="term" value="F:thymidine kinase activity"/>
    <property type="evidence" value="ECO:0000318"/>
    <property type="project" value="GO_Central"/>
</dbReference>
<dbReference type="GO" id="GO:0008270">
    <property type="term" value="F:zinc ion binding"/>
    <property type="evidence" value="ECO:0007669"/>
    <property type="project" value="UniProtKB-UniRule"/>
</dbReference>
<dbReference type="GO" id="GO:0071897">
    <property type="term" value="P:DNA biosynthetic process"/>
    <property type="evidence" value="ECO:0007669"/>
    <property type="project" value="UniProtKB-KW"/>
</dbReference>
<dbReference type="GO" id="GO:0046104">
    <property type="term" value="P:thymidine metabolic process"/>
    <property type="evidence" value="ECO:0000318"/>
    <property type="project" value="GO_Central"/>
</dbReference>
<dbReference type="FunFam" id="3.40.50.300:FF:000323">
    <property type="entry name" value="Thymidine kinase"/>
    <property type="match status" value="1"/>
</dbReference>
<dbReference type="Gene3D" id="3.30.60.20">
    <property type="match status" value="1"/>
</dbReference>
<dbReference type="Gene3D" id="3.40.50.300">
    <property type="entry name" value="P-loop containing nucleotide triphosphate hydrolases"/>
    <property type="match status" value="1"/>
</dbReference>
<dbReference type="HAMAP" id="MF_00124">
    <property type="entry name" value="Thymidine_kinase"/>
    <property type="match status" value="1"/>
</dbReference>
<dbReference type="InterPro" id="IPR027417">
    <property type="entry name" value="P-loop_NTPase"/>
</dbReference>
<dbReference type="InterPro" id="IPR001267">
    <property type="entry name" value="Thymidine_kinase"/>
</dbReference>
<dbReference type="InterPro" id="IPR020633">
    <property type="entry name" value="Thymidine_kinase_CS"/>
</dbReference>
<dbReference type="NCBIfam" id="NF003300">
    <property type="entry name" value="PRK04296.1-5"/>
    <property type="match status" value="1"/>
</dbReference>
<dbReference type="PANTHER" id="PTHR11441">
    <property type="entry name" value="THYMIDINE KINASE"/>
    <property type="match status" value="1"/>
</dbReference>
<dbReference type="PANTHER" id="PTHR11441:SF0">
    <property type="entry name" value="THYMIDINE KINASE, CYTOSOLIC"/>
    <property type="match status" value="1"/>
</dbReference>
<dbReference type="Pfam" id="PF00265">
    <property type="entry name" value="TK"/>
    <property type="match status" value="1"/>
</dbReference>
<dbReference type="PIRSF" id="PIRSF035805">
    <property type="entry name" value="TK_cell"/>
    <property type="match status" value="1"/>
</dbReference>
<dbReference type="SUPFAM" id="SSF57716">
    <property type="entry name" value="Glucocorticoid receptor-like (DNA-binding domain)"/>
    <property type="match status" value="1"/>
</dbReference>
<dbReference type="SUPFAM" id="SSF52540">
    <property type="entry name" value="P-loop containing nucleoside triphosphate hydrolases"/>
    <property type="match status" value="1"/>
</dbReference>
<dbReference type="PROSITE" id="PS00603">
    <property type="entry name" value="TK_CELLULAR_TYPE"/>
    <property type="match status" value="1"/>
</dbReference>
<keyword id="KW-0067">ATP-binding</keyword>
<keyword id="KW-0963">Cytoplasm</keyword>
<keyword id="KW-0237">DNA synthesis</keyword>
<keyword id="KW-0418">Kinase</keyword>
<keyword id="KW-0479">Metal-binding</keyword>
<keyword id="KW-0547">Nucleotide-binding</keyword>
<keyword id="KW-1185">Reference proteome</keyword>
<keyword id="KW-0808">Transferase</keyword>
<keyword id="KW-0862">Zinc</keyword>
<evidence type="ECO:0000255" key="1">
    <source>
        <dbReference type="HAMAP-Rule" id="MF_00124"/>
    </source>
</evidence>